<protein>
    <recommendedName>
        <fullName>Conserved virulence factor B</fullName>
    </recommendedName>
</protein>
<gene>
    <name type="primary">cvfB</name>
    <name type="ordered locus">SAV1391</name>
</gene>
<keyword id="KW-0843">Virulence</keyword>
<reference key="1">
    <citation type="journal article" date="2001" name="Lancet">
        <title>Whole genome sequencing of meticillin-resistant Staphylococcus aureus.</title>
        <authorList>
            <person name="Kuroda M."/>
            <person name="Ohta T."/>
            <person name="Uchiyama I."/>
            <person name="Baba T."/>
            <person name="Yuzawa H."/>
            <person name="Kobayashi I."/>
            <person name="Cui L."/>
            <person name="Oguchi A."/>
            <person name="Aoki K."/>
            <person name="Nagai Y."/>
            <person name="Lian J.-Q."/>
            <person name="Ito T."/>
            <person name="Kanamori M."/>
            <person name="Matsumaru H."/>
            <person name="Maruyama A."/>
            <person name="Murakami H."/>
            <person name="Hosoyama A."/>
            <person name="Mizutani-Ui Y."/>
            <person name="Takahashi N.K."/>
            <person name="Sawano T."/>
            <person name="Inoue R."/>
            <person name="Kaito C."/>
            <person name="Sekimizu K."/>
            <person name="Hirakawa H."/>
            <person name="Kuhara S."/>
            <person name="Goto S."/>
            <person name="Yabuzaki J."/>
            <person name="Kanehisa M."/>
            <person name="Yamashita A."/>
            <person name="Oshima K."/>
            <person name="Furuya K."/>
            <person name="Yoshino C."/>
            <person name="Shiba T."/>
            <person name="Hattori M."/>
            <person name="Ogasawara N."/>
            <person name="Hayashi H."/>
            <person name="Hiramatsu K."/>
        </authorList>
    </citation>
    <scope>NUCLEOTIDE SEQUENCE [LARGE SCALE GENOMIC DNA]</scope>
    <source>
        <strain>Mu50 / ATCC 700699</strain>
    </source>
</reference>
<dbReference type="EMBL" id="BA000017">
    <property type="protein sequence ID" value="BAB57553.1"/>
    <property type="molecule type" value="Genomic_DNA"/>
</dbReference>
<dbReference type="RefSeq" id="WP_001162352.1">
    <property type="nucleotide sequence ID" value="NC_002758.2"/>
</dbReference>
<dbReference type="SMR" id="Q99U93"/>
<dbReference type="DNASU" id="1121366"/>
<dbReference type="GeneID" id="66839583"/>
<dbReference type="KEGG" id="sav:SAV1391"/>
<dbReference type="HOGENOM" id="CLU_064885_0_0_9"/>
<dbReference type="PhylomeDB" id="Q99U93"/>
<dbReference type="Proteomes" id="UP000002481">
    <property type="component" value="Chromosome"/>
</dbReference>
<dbReference type="Gene3D" id="2.40.50.140">
    <property type="entry name" value="Nucleic acid-binding proteins"/>
    <property type="match status" value="2"/>
</dbReference>
<dbReference type="Gene3D" id="1.10.10.10">
    <property type="entry name" value="Winged helix-like DNA-binding domain superfamily/Winged helix DNA-binding domain"/>
    <property type="match status" value="1"/>
</dbReference>
<dbReference type="InterPro" id="IPR014464">
    <property type="entry name" value="CvfB_fam"/>
</dbReference>
<dbReference type="InterPro" id="IPR048588">
    <property type="entry name" value="CvfB_S1_2nd"/>
</dbReference>
<dbReference type="InterPro" id="IPR048587">
    <property type="entry name" value="CvfB_S1_3rd"/>
</dbReference>
<dbReference type="InterPro" id="IPR039566">
    <property type="entry name" value="CvfB_S1_st"/>
</dbReference>
<dbReference type="InterPro" id="IPR040764">
    <property type="entry name" value="CvfB_WH"/>
</dbReference>
<dbReference type="InterPro" id="IPR012340">
    <property type="entry name" value="NA-bd_OB-fold"/>
</dbReference>
<dbReference type="InterPro" id="IPR036388">
    <property type="entry name" value="WH-like_DNA-bd_sf"/>
</dbReference>
<dbReference type="PANTHER" id="PTHR37296">
    <property type="entry name" value="CONSERVED VIRULENCE FACTOR B"/>
    <property type="match status" value="1"/>
</dbReference>
<dbReference type="PANTHER" id="PTHR37296:SF1">
    <property type="entry name" value="CONSERVED VIRULENCE FACTOR B"/>
    <property type="match status" value="1"/>
</dbReference>
<dbReference type="Pfam" id="PF21191">
    <property type="entry name" value="CvfB_1st"/>
    <property type="match status" value="1"/>
</dbReference>
<dbReference type="Pfam" id="PF21543">
    <property type="entry name" value="CvfB_2nd"/>
    <property type="match status" value="1"/>
</dbReference>
<dbReference type="Pfam" id="PF17783">
    <property type="entry name" value="CvfB_WH"/>
    <property type="match status" value="1"/>
</dbReference>
<dbReference type="Pfam" id="PF13509">
    <property type="entry name" value="S1_2"/>
    <property type="match status" value="1"/>
</dbReference>
<dbReference type="PIRSF" id="PIRSF012524">
    <property type="entry name" value="YitL_S1"/>
    <property type="match status" value="1"/>
</dbReference>
<comment type="function">
    <text evidence="1">Contributes to the expression of virulence factors and to pathogenicity. Involved in the production of hemolysin, DNase, protease and protein A (By similarity).</text>
</comment>
<comment type="similarity">
    <text evidence="2">Belongs to the CvfB family.</text>
</comment>
<evidence type="ECO:0000250" key="1"/>
<evidence type="ECO:0000305" key="2"/>
<sequence length="300" mass="34185">MALDKDIVGSIEFLEVVGLQGSTYLLKGPNGENVKLNQSEMNDDDELEVGEEYSFFIYPNRSGELFATQNMPDITKDKYDFAKVLKTDRDGARIDVGLPREVLVPWEDLPKVKSLWPQPGDHLLVTLRIDRENHMYGRLASESVVENMFTPVHDDNLKNEVIEAKPYRVLRIGSFLLSESGYKIFVHESERKAEPRLGESVQVRIIGHNDKGELNGSFLPLAHERLDDDGQVIFDLLVEYDGELPFWDKSSPEAIKEVFNMSKGSFKRAIGHLYKQKIINIETGKITLTKKGWSRIDSKE</sequence>
<feature type="chain" id="PRO_0000282293" description="Conserved virulence factor B">
    <location>
        <begin position="1"/>
        <end position="300"/>
    </location>
</feature>
<accession>Q99U93</accession>
<organism>
    <name type="scientific">Staphylococcus aureus (strain Mu50 / ATCC 700699)</name>
    <dbReference type="NCBI Taxonomy" id="158878"/>
    <lineage>
        <taxon>Bacteria</taxon>
        <taxon>Bacillati</taxon>
        <taxon>Bacillota</taxon>
        <taxon>Bacilli</taxon>
        <taxon>Bacillales</taxon>
        <taxon>Staphylococcaceae</taxon>
        <taxon>Staphylococcus</taxon>
    </lineage>
</organism>
<name>CVFB_STAAM</name>
<proteinExistence type="inferred from homology"/>